<protein>
    <recommendedName>
        <fullName>Myocardin</fullName>
    </recommendedName>
    <alternativeName>
        <fullName>Basic SAP coiled-coil transcription activator 2</fullName>
    </alternativeName>
    <alternativeName>
        <fullName>SRF cofactor protein</fullName>
    </alternativeName>
</protein>
<name>MYCD_MOUSE</name>
<dbReference type="EMBL" id="AF384055">
    <property type="protein sequence ID" value="AAK71683.2"/>
    <property type="molecule type" value="mRNA"/>
</dbReference>
<dbReference type="EMBL" id="AY303755">
    <property type="protein sequence ID" value="AAQ63841.1"/>
    <property type="molecule type" value="mRNA"/>
</dbReference>
<dbReference type="EMBL" id="AF437877">
    <property type="protein sequence ID" value="AAL30892.1"/>
    <property type="molecule type" value="mRNA"/>
</dbReference>
<dbReference type="EMBL" id="AK084700">
    <property type="protein sequence ID" value="BAC39258.1"/>
    <property type="molecule type" value="mRNA"/>
</dbReference>
<dbReference type="EMBL" id="AK142216">
    <property type="protein sequence ID" value="BAE24980.1"/>
    <property type="molecule type" value="mRNA"/>
</dbReference>
<dbReference type="EMBL" id="AL669846">
    <property type="status" value="NOT_ANNOTATED_CDS"/>
    <property type="molecule type" value="Genomic_DNA"/>
</dbReference>
<dbReference type="CCDS" id="CCDS24843.1">
    <molecule id="Q8VIM5-1"/>
</dbReference>
<dbReference type="CCDS" id="CCDS48819.1">
    <molecule id="Q8VIM5-3"/>
</dbReference>
<dbReference type="RefSeq" id="NP_660118.3">
    <molecule id="Q8VIM5-3"/>
    <property type="nucleotide sequence ID" value="NM_145136.5"/>
</dbReference>
<dbReference type="RefSeq" id="NP_666498.2">
    <molecule id="Q8VIM5-1"/>
    <property type="nucleotide sequence ID" value="NM_146386.4"/>
</dbReference>
<dbReference type="RefSeq" id="XP_011247197.1">
    <molecule id="Q8VIM5-4"/>
    <property type="nucleotide sequence ID" value="XM_011248895.1"/>
</dbReference>
<dbReference type="SMR" id="Q8VIM5"/>
<dbReference type="BioGRID" id="229522">
    <property type="interactions" value="16"/>
</dbReference>
<dbReference type="CORUM" id="Q8VIM5"/>
<dbReference type="DIP" id="DIP-29754N"/>
<dbReference type="ELM" id="Q8VIM5"/>
<dbReference type="FunCoup" id="Q8VIM5">
    <property type="interactions" value="811"/>
</dbReference>
<dbReference type="IntAct" id="Q8VIM5">
    <property type="interactions" value="9"/>
</dbReference>
<dbReference type="STRING" id="10090.ENSMUSP00000104335"/>
<dbReference type="GlyGen" id="Q8VIM5">
    <property type="glycosylation" value="1 site"/>
</dbReference>
<dbReference type="iPTMnet" id="Q8VIM5"/>
<dbReference type="PhosphoSitePlus" id="Q8VIM5"/>
<dbReference type="PaxDb" id="10090-ENSMUSP00000099695"/>
<dbReference type="ProteomicsDB" id="287562">
    <molecule id="Q8VIM5-1"/>
</dbReference>
<dbReference type="ProteomicsDB" id="287563">
    <molecule id="Q8VIM5-2"/>
</dbReference>
<dbReference type="ProteomicsDB" id="287564">
    <molecule id="Q8VIM5-3"/>
</dbReference>
<dbReference type="ProteomicsDB" id="287565">
    <molecule id="Q8VIM5-4"/>
</dbReference>
<dbReference type="ProteomicsDB" id="287566">
    <molecule id="Q8VIM5-5"/>
</dbReference>
<dbReference type="Antibodypedia" id="25055">
    <property type="antibodies" value="125 antibodies from 25 providers"/>
</dbReference>
<dbReference type="DNASU" id="214384"/>
<dbReference type="Ensembl" id="ENSMUST00000101042.9">
    <molecule id="Q8VIM5-2"/>
    <property type="protein sequence ID" value="ENSMUSP00000098603.3"/>
    <property type="gene ID" value="ENSMUSG00000020542.19"/>
</dbReference>
<dbReference type="Ensembl" id="ENSMUST00000102635.10">
    <molecule id="Q8VIM5-1"/>
    <property type="protein sequence ID" value="ENSMUSP00000099695.4"/>
    <property type="gene ID" value="ENSMUSG00000020542.19"/>
</dbReference>
<dbReference type="Ensembl" id="ENSMUST00000108695.9">
    <molecule id="Q8VIM5-3"/>
    <property type="protein sequence ID" value="ENSMUSP00000104335.3"/>
    <property type="gene ID" value="ENSMUSG00000020542.19"/>
</dbReference>
<dbReference type="GeneID" id="214384"/>
<dbReference type="KEGG" id="mmu:214384"/>
<dbReference type="UCSC" id="uc007jky.2">
    <molecule id="Q8VIM5-3"/>
    <property type="organism name" value="mouse"/>
</dbReference>
<dbReference type="UCSC" id="uc007jkz.2">
    <molecule id="Q8VIM5-1"/>
    <property type="organism name" value="mouse"/>
</dbReference>
<dbReference type="AGR" id="MGI:2137495"/>
<dbReference type="CTD" id="93649"/>
<dbReference type="MGI" id="MGI:2137495">
    <property type="gene designation" value="Myocd"/>
</dbReference>
<dbReference type="VEuPathDB" id="HostDB:ENSMUSG00000020542"/>
<dbReference type="eggNOG" id="ENOG502QTAN">
    <property type="taxonomic scope" value="Eukaryota"/>
</dbReference>
<dbReference type="GeneTree" id="ENSGT00950000182979"/>
<dbReference type="HOGENOM" id="CLU_007042_2_0_1"/>
<dbReference type="InParanoid" id="Q8VIM5"/>
<dbReference type="OMA" id="PLPFEHC"/>
<dbReference type="TreeFam" id="TF326024"/>
<dbReference type="BioGRID-ORCS" id="214384">
    <property type="hits" value="2 hits in 79 CRISPR screens"/>
</dbReference>
<dbReference type="ChiTaRS" id="Myocd">
    <property type="organism name" value="mouse"/>
</dbReference>
<dbReference type="PRO" id="PR:Q8VIM5"/>
<dbReference type="Proteomes" id="UP000000589">
    <property type="component" value="Chromosome 11"/>
</dbReference>
<dbReference type="RNAct" id="Q8VIM5">
    <property type="molecule type" value="protein"/>
</dbReference>
<dbReference type="Bgee" id="ENSMUSG00000020542">
    <property type="expression patterns" value="Expressed in ascending aorta and 107 other cell types or tissues"/>
</dbReference>
<dbReference type="ExpressionAtlas" id="Q8VIM5">
    <property type="expression patterns" value="baseline and differential"/>
</dbReference>
<dbReference type="GO" id="GO:0000785">
    <property type="term" value="C:chromatin"/>
    <property type="evidence" value="ECO:0000314"/>
    <property type="project" value="BHF-UCL"/>
</dbReference>
<dbReference type="GO" id="GO:0016607">
    <property type="term" value="C:nuclear speck"/>
    <property type="evidence" value="ECO:0007669"/>
    <property type="project" value="UniProtKB-SubCell"/>
</dbReference>
<dbReference type="GO" id="GO:0005654">
    <property type="term" value="C:nucleoplasm"/>
    <property type="evidence" value="ECO:0000304"/>
    <property type="project" value="Reactome"/>
</dbReference>
<dbReference type="GO" id="GO:0005634">
    <property type="term" value="C:nucleus"/>
    <property type="evidence" value="ECO:0000314"/>
    <property type="project" value="UniProtKB"/>
</dbReference>
<dbReference type="GO" id="GO:0070514">
    <property type="term" value="C:SRF-myogenin-E12 complex"/>
    <property type="evidence" value="ECO:0000305"/>
    <property type="project" value="BHF-UCL"/>
</dbReference>
<dbReference type="GO" id="GO:0035035">
    <property type="term" value="F:histone acetyltransferase binding"/>
    <property type="evidence" value="ECO:0000353"/>
    <property type="project" value="MGI"/>
</dbReference>
<dbReference type="GO" id="GO:0042826">
    <property type="term" value="F:histone deacetylase binding"/>
    <property type="evidence" value="ECO:0000353"/>
    <property type="project" value="MGI"/>
</dbReference>
<dbReference type="GO" id="GO:0070412">
    <property type="term" value="F:R-SMAD binding"/>
    <property type="evidence" value="ECO:0000353"/>
    <property type="project" value="BHF-UCL"/>
</dbReference>
<dbReference type="GO" id="GO:0061629">
    <property type="term" value="F:RNA polymerase II-specific DNA-binding transcription factor binding"/>
    <property type="evidence" value="ECO:0000353"/>
    <property type="project" value="BHF-UCL"/>
</dbReference>
<dbReference type="GO" id="GO:0003713">
    <property type="term" value="F:transcription coactivator activity"/>
    <property type="evidence" value="ECO:0000314"/>
    <property type="project" value="BHF-UCL"/>
</dbReference>
<dbReference type="GO" id="GO:0010659">
    <property type="term" value="P:cardiac muscle cell apoptotic process"/>
    <property type="evidence" value="ECO:0000315"/>
    <property type="project" value="MGI"/>
</dbReference>
<dbReference type="GO" id="GO:0055007">
    <property type="term" value="P:cardiac muscle cell differentiation"/>
    <property type="evidence" value="ECO:0000315"/>
    <property type="project" value="BHF-UCL"/>
</dbReference>
<dbReference type="GO" id="GO:0060379">
    <property type="term" value="P:cardiac muscle cell myoblast differentiation"/>
    <property type="evidence" value="ECO:0007669"/>
    <property type="project" value="Ensembl"/>
</dbReference>
<dbReference type="GO" id="GO:0003231">
    <property type="term" value="P:cardiac ventricle development"/>
    <property type="evidence" value="ECO:0000315"/>
    <property type="project" value="MGI"/>
</dbReference>
<dbReference type="GO" id="GO:0043954">
    <property type="term" value="P:cellular component maintenance"/>
    <property type="evidence" value="ECO:0000315"/>
    <property type="project" value="MGI"/>
</dbReference>
<dbReference type="GO" id="GO:0006325">
    <property type="term" value="P:chromatin organization"/>
    <property type="evidence" value="ECO:0000314"/>
    <property type="project" value="MGI"/>
</dbReference>
<dbReference type="GO" id="GO:0048565">
    <property type="term" value="P:digestive tract development"/>
    <property type="evidence" value="ECO:0000315"/>
    <property type="project" value="MGI"/>
</dbReference>
<dbReference type="GO" id="GO:0097070">
    <property type="term" value="P:ductus arteriosus closure"/>
    <property type="evidence" value="ECO:0000315"/>
    <property type="project" value="MGI"/>
</dbReference>
<dbReference type="GO" id="GO:0007507">
    <property type="term" value="P:heart development"/>
    <property type="evidence" value="ECO:0000314"/>
    <property type="project" value="BHF-UCL"/>
</dbReference>
<dbReference type="GO" id="GO:0048286">
    <property type="term" value="P:lung alveolus development"/>
    <property type="evidence" value="ECO:0000315"/>
    <property type="project" value="MGI"/>
</dbReference>
<dbReference type="GO" id="GO:1900222">
    <property type="term" value="P:negative regulation of amyloid-beta clearance"/>
    <property type="evidence" value="ECO:0007669"/>
    <property type="project" value="Ensembl"/>
</dbReference>
<dbReference type="GO" id="GO:0010667">
    <property type="term" value="P:negative regulation of cardiac muscle cell apoptotic process"/>
    <property type="evidence" value="ECO:0000315"/>
    <property type="project" value="MGI"/>
</dbReference>
<dbReference type="GO" id="GO:0060354">
    <property type="term" value="P:negative regulation of cell adhesion molecule production"/>
    <property type="evidence" value="ECO:0000314"/>
    <property type="project" value="ARUK-UCL"/>
</dbReference>
<dbReference type="GO" id="GO:0010832">
    <property type="term" value="P:negative regulation of myotube differentiation"/>
    <property type="evidence" value="ECO:0000315"/>
    <property type="project" value="MGI"/>
</dbReference>
<dbReference type="GO" id="GO:2000587">
    <property type="term" value="P:negative regulation of platelet-derived growth factor receptor-beta signaling pathway"/>
    <property type="evidence" value="ECO:0000314"/>
    <property type="project" value="BHF-UCL"/>
</dbReference>
<dbReference type="GO" id="GO:2001015">
    <property type="term" value="P:negative regulation of skeletal muscle cell differentiation"/>
    <property type="evidence" value="ECO:0007669"/>
    <property type="project" value="Ensembl"/>
</dbReference>
<dbReference type="GO" id="GO:0000122">
    <property type="term" value="P:negative regulation of transcription by RNA polymerase II"/>
    <property type="evidence" value="ECO:0000316"/>
    <property type="project" value="MGI"/>
</dbReference>
<dbReference type="GO" id="GO:1904753">
    <property type="term" value="P:negative regulation of vascular associated smooth muscle cell migration"/>
    <property type="evidence" value="ECO:0000314"/>
    <property type="project" value="BHF-UCL"/>
</dbReference>
<dbReference type="GO" id="GO:1904706">
    <property type="term" value="P:negative regulation of vascular associated smooth muscle cell proliferation"/>
    <property type="evidence" value="ECO:0000314"/>
    <property type="project" value="BHF-UCL"/>
</dbReference>
<dbReference type="GO" id="GO:2000727">
    <property type="term" value="P:positive regulation of cardiac muscle cell differentiation"/>
    <property type="evidence" value="ECO:0007669"/>
    <property type="project" value="Ensembl"/>
</dbReference>
<dbReference type="GO" id="GO:0008284">
    <property type="term" value="P:positive regulation of cell population proliferation"/>
    <property type="evidence" value="ECO:0000314"/>
    <property type="project" value="MGI"/>
</dbReference>
<dbReference type="GO" id="GO:0045893">
    <property type="term" value="P:positive regulation of DNA-templated transcription"/>
    <property type="evidence" value="ECO:0000314"/>
    <property type="project" value="MGI"/>
</dbReference>
<dbReference type="GO" id="GO:0010628">
    <property type="term" value="P:positive regulation of gene expression"/>
    <property type="evidence" value="ECO:0000314"/>
    <property type="project" value="BHF-UCL"/>
</dbReference>
<dbReference type="GO" id="GO:1902895">
    <property type="term" value="P:positive regulation of miRNA transcription"/>
    <property type="evidence" value="ECO:0000314"/>
    <property type="project" value="BHF-UCL"/>
</dbReference>
<dbReference type="GO" id="GO:0051152">
    <property type="term" value="P:positive regulation of smooth muscle cell differentiation"/>
    <property type="evidence" value="ECO:0007669"/>
    <property type="project" value="Ensembl"/>
</dbReference>
<dbReference type="GO" id="GO:0045987">
    <property type="term" value="P:positive regulation of smooth muscle contraction"/>
    <property type="evidence" value="ECO:0007669"/>
    <property type="project" value="Ensembl"/>
</dbReference>
<dbReference type="GO" id="GO:0045944">
    <property type="term" value="P:positive regulation of transcription by RNA polymerase II"/>
    <property type="evidence" value="ECO:0000314"/>
    <property type="project" value="BHF-UCL"/>
</dbReference>
<dbReference type="GO" id="GO:0030511">
    <property type="term" value="P:positive regulation of transforming growth factor beta receptor signaling pathway"/>
    <property type="evidence" value="ECO:0000314"/>
    <property type="project" value="BHF-UCL"/>
</dbReference>
<dbReference type="GO" id="GO:0001560">
    <property type="term" value="P:regulation of cell growth by extracellular stimulus"/>
    <property type="evidence" value="ECO:0000314"/>
    <property type="project" value="MGI"/>
</dbReference>
<dbReference type="GO" id="GO:0045661">
    <property type="term" value="P:regulation of myoblast differentiation"/>
    <property type="evidence" value="ECO:0000315"/>
    <property type="project" value="MGI"/>
</dbReference>
<dbReference type="GO" id="GO:1900239">
    <property type="term" value="P:regulation of phenotypic switching"/>
    <property type="evidence" value="ECO:0000316"/>
    <property type="project" value="BHF-UCL"/>
</dbReference>
<dbReference type="GO" id="GO:0006357">
    <property type="term" value="P:regulation of transcription by RNA polymerase II"/>
    <property type="evidence" value="ECO:0000314"/>
    <property type="project" value="MGI"/>
</dbReference>
<dbReference type="GO" id="GO:0001666">
    <property type="term" value="P:response to hypoxia"/>
    <property type="evidence" value="ECO:0007669"/>
    <property type="project" value="Ensembl"/>
</dbReference>
<dbReference type="GO" id="GO:0051145">
    <property type="term" value="P:smooth muscle cell differentiation"/>
    <property type="evidence" value="ECO:0000315"/>
    <property type="project" value="MGI"/>
</dbReference>
<dbReference type="GO" id="GO:0006366">
    <property type="term" value="P:transcription by RNA polymerase II"/>
    <property type="evidence" value="ECO:0000316"/>
    <property type="project" value="MGI"/>
</dbReference>
<dbReference type="GO" id="GO:0045815">
    <property type="term" value="P:transcription initiation-coupled chromatin remodeling"/>
    <property type="evidence" value="ECO:0000314"/>
    <property type="project" value="UniProtKB"/>
</dbReference>
<dbReference type="GO" id="GO:0060157">
    <property type="term" value="P:urinary bladder development"/>
    <property type="evidence" value="ECO:0000315"/>
    <property type="project" value="MGI"/>
</dbReference>
<dbReference type="GO" id="GO:0060065">
    <property type="term" value="P:uterus development"/>
    <property type="evidence" value="ECO:0000315"/>
    <property type="project" value="MGI"/>
</dbReference>
<dbReference type="GO" id="GO:0035886">
    <property type="term" value="P:vascular associated smooth muscle cell differentiation"/>
    <property type="evidence" value="ECO:0000316"/>
    <property type="project" value="BHF-UCL"/>
</dbReference>
<dbReference type="GO" id="GO:0001570">
    <property type="term" value="P:vasculogenesis"/>
    <property type="evidence" value="ECO:0000315"/>
    <property type="project" value="MGI"/>
</dbReference>
<dbReference type="GO" id="GO:0055012">
    <property type="term" value="P:ventricular cardiac muscle cell differentiation"/>
    <property type="evidence" value="ECO:0000315"/>
    <property type="project" value="MGI"/>
</dbReference>
<dbReference type="FunFam" id="1.10.720.30:FF:000008">
    <property type="entry name" value="Myocardin"/>
    <property type="match status" value="1"/>
</dbReference>
<dbReference type="Gene3D" id="6.10.140.2040">
    <property type="match status" value="1"/>
</dbReference>
<dbReference type="Gene3D" id="6.10.150.10">
    <property type="match status" value="1"/>
</dbReference>
<dbReference type="Gene3D" id="1.10.720.30">
    <property type="entry name" value="SAP domain"/>
    <property type="match status" value="1"/>
</dbReference>
<dbReference type="InterPro" id="IPR043451">
    <property type="entry name" value="Myocardin-like"/>
</dbReference>
<dbReference type="InterPro" id="IPR004018">
    <property type="entry name" value="RPEL_repeat"/>
</dbReference>
<dbReference type="InterPro" id="IPR003034">
    <property type="entry name" value="SAP_dom"/>
</dbReference>
<dbReference type="InterPro" id="IPR036361">
    <property type="entry name" value="SAP_dom_sf"/>
</dbReference>
<dbReference type="PANTHER" id="PTHR22793:SF11">
    <property type="entry name" value="MYOCARDIN"/>
    <property type="match status" value="1"/>
</dbReference>
<dbReference type="PANTHER" id="PTHR22793">
    <property type="entry name" value="MYOCARDIN-RELATED TRANSCRIPTION FACTOR-RELATED"/>
    <property type="match status" value="1"/>
</dbReference>
<dbReference type="Pfam" id="PF02755">
    <property type="entry name" value="RPEL"/>
    <property type="match status" value="1"/>
</dbReference>
<dbReference type="Pfam" id="PF02037">
    <property type="entry name" value="SAP"/>
    <property type="match status" value="1"/>
</dbReference>
<dbReference type="SMART" id="SM00707">
    <property type="entry name" value="RPEL"/>
    <property type="match status" value="3"/>
</dbReference>
<dbReference type="SMART" id="SM00513">
    <property type="entry name" value="SAP"/>
    <property type="match status" value="1"/>
</dbReference>
<dbReference type="SUPFAM" id="SSF68906">
    <property type="entry name" value="SAP domain"/>
    <property type="match status" value="1"/>
</dbReference>
<dbReference type="PROSITE" id="PS51073">
    <property type="entry name" value="RPEL"/>
    <property type="match status" value="3"/>
</dbReference>
<dbReference type="PROSITE" id="PS50800">
    <property type="entry name" value="SAP"/>
    <property type="match status" value="1"/>
</dbReference>
<organism>
    <name type="scientific">Mus musculus</name>
    <name type="common">Mouse</name>
    <dbReference type="NCBI Taxonomy" id="10090"/>
    <lineage>
        <taxon>Eukaryota</taxon>
        <taxon>Metazoa</taxon>
        <taxon>Chordata</taxon>
        <taxon>Craniata</taxon>
        <taxon>Vertebrata</taxon>
        <taxon>Euteleostomi</taxon>
        <taxon>Mammalia</taxon>
        <taxon>Eutheria</taxon>
        <taxon>Euarchontoglires</taxon>
        <taxon>Glires</taxon>
        <taxon>Rodentia</taxon>
        <taxon>Myomorpha</taxon>
        <taxon>Muroidea</taxon>
        <taxon>Muridae</taxon>
        <taxon>Murinae</taxon>
        <taxon>Mus</taxon>
        <taxon>Mus</taxon>
    </lineage>
</organism>
<keyword id="KW-0010">Activator</keyword>
<keyword id="KW-0025">Alternative splicing</keyword>
<keyword id="KW-0175">Coiled coil</keyword>
<keyword id="KW-0539">Nucleus</keyword>
<keyword id="KW-0597">Phosphoprotein</keyword>
<keyword id="KW-1185">Reference proteome</keyword>
<keyword id="KW-0677">Repeat</keyword>
<keyword id="KW-0804">Transcription</keyword>
<keyword id="KW-0805">Transcription regulation</keyword>
<keyword id="KW-0832">Ubl conjugation</keyword>
<evidence type="ECO:0000250" key="1">
    <source>
        <dbReference type="UniProtKB" id="Q8IZQ8"/>
    </source>
</evidence>
<evidence type="ECO:0000250" key="2">
    <source>
        <dbReference type="UniProtKB" id="Q8R5I7"/>
    </source>
</evidence>
<evidence type="ECO:0000255" key="3"/>
<evidence type="ECO:0000255" key="4">
    <source>
        <dbReference type="PROSITE-ProRule" id="PRU00186"/>
    </source>
</evidence>
<evidence type="ECO:0000256" key="5">
    <source>
        <dbReference type="SAM" id="MobiDB-lite"/>
    </source>
</evidence>
<evidence type="ECO:0000269" key="6">
    <source>
    </source>
</evidence>
<evidence type="ECO:0000269" key="7">
    <source>
    </source>
</evidence>
<evidence type="ECO:0000269" key="8">
    <source>
    </source>
</evidence>
<evidence type="ECO:0000269" key="9">
    <source>
    </source>
</evidence>
<evidence type="ECO:0000269" key="10">
    <source>
    </source>
</evidence>
<evidence type="ECO:0000269" key="11">
    <source>
    </source>
</evidence>
<evidence type="ECO:0000269" key="12">
    <source>
    </source>
</evidence>
<evidence type="ECO:0000269" key="13">
    <source>
    </source>
</evidence>
<evidence type="ECO:0000269" key="14">
    <source>
    </source>
</evidence>
<evidence type="ECO:0000269" key="15">
    <source>
    </source>
</evidence>
<evidence type="ECO:0000269" key="16">
    <source>
    </source>
</evidence>
<evidence type="ECO:0000269" key="17">
    <source>
    </source>
</evidence>
<evidence type="ECO:0000269" key="18">
    <source>
    </source>
</evidence>
<evidence type="ECO:0000303" key="19">
    <source>
    </source>
</evidence>
<evidence type="ECO:0000303" key="20">
    <source ref="4"/>
</evidence>
<evidence type="ECO:0000305" key="21"/>
<feature type="chain" id="PRO_0000126632" description="Myocardin">
    <location>
        <begin position="1"/>
        <end position="935"/>
    </location>
</feature>
<feature type="repeat" description="RPEL 1">
    <location>
        <begin position="18"/>
        <end position="43"/>
    </location>
</feature>
<feature type="repeat" description="RPEL 2">
    <location>
        <begin position="62"/>
        <end position="87"/>
    </location>
</feature>
<feature type="repeat" description="RPEL 3">
    <location>
        <begin position="106"/>
        <end position="131"/>
    </location>
</feature>
<feature type="domain" description="SAP" evidence="4">
    <location>
        <begin position="380"/>
        <end position="414"/>
    </location>
</feature>
<feature type="region of interest" description="Disordered" evidence="5">
    <location>
        <begin position="37"/>
        <end position="73"/>
    </location>
</feature>
<feature type="region of interest" description="HDAC5-binding">
    <location>
        <begin position="153"/>
        <end position="201"/>
    </location>
</feature>
<feature type="region of interest" description="Disordered" evidence="5">
    <location>
        <begin position="155"/>
        <end position="283"/>
    </location>
</feature>
<feature type="region of interest" description="Disordered" evidence="5">
    <location>
        <begin position="337"/>
        <end position="378"/>
    </location>
</feature>
<feature type="region of interest" description="Disordered" evidence="5">
    <location>
        <begin position="498"/>
        <end position="518"/>
    </location>
</feature>
<feature type="region of interest" description="Disordered" evidence="5">
    <location>
        <begin position="579"/>
        <end position="605"/>
    </location>
</feature>
<feature type="region of interest" description="Disordered" evidence="5">
    <location>
        <begin position="654"/>
        <end position="731"/>
    </location>
</feature>
<feature type="region of interest" description="Required for interaction with and ubiquitination by STUB1" evidence="14">
    <location>
        <begin position="714"/>
        <end position="935"/>
    </location>
</feature>
<feature type="coiled-coil region" evidence="3">
    <location>
        <begin position="287"/>
        <end position="322"/>
    </location>
</feature>
<feature type="coiled-coil region" evidence="3">
    <location>
        <begin position="519"/>
        <end position="563"/>
    </location>
</feature>
<feature type="short sequence motif" description="MEF2C-binding">
    <location>
        <begin position="12"/>
        <end position="27"/>
    </location>
</feature>
<feature type="compositionally biased region" description="Basic and acidic residues" evidence="5">
    <location>
        <begin position="46"/>
        <end position="73"/>
    </location>
</feature>
<feature type="compositionally biased region" description="Polar residues" evidence="5">
    <location>
        <begin position="172"/>
        <end position="182"/>
    </location>
</feature>
<feature type="compositionally biased region" description="Polar residues" evidence="5">
    <location>
        <begin position="206"/>
        <end position="216"/>
    </location>
</feature>
<feature type="compositionally biased region" description="Basic residues" evidence="5">
    <location>
        <begin position="244"/>
        <end position="261"/>
    </location>
</feature>
<feature type="compositionally biased region" description="Low complexity" evidence="5">
    <location>
        <begin position="342"/>
        <end position="357"/>
    </location>
</feature>
<feature type="compositionally biased region" description="Polar residues" evidence="5">
    <location>
        <begin position="358"/>
        <end position="369"/>
    </location>
</feature>
<feature type="compositionally biased region" description="Polar residues" evidence="5">
    <location>
        <begin position="585"/>
        <end position="597"/>
    </location>
</feature>
<feature type="compositionally biased region" description="Polar residues" evidence="5">
    <location>
        <begin position="660"/>
        <end position="691"/>
    </location>
</feature>
<feature type="compositionally biased region" description="Low complexity" evidence="5">
    <location>
        <begin position="695"/>
        <end position="709"/>
    </location>
</feature>
<feature type="modified residue" description="Phosphoserine; by GSK3-beta" evidence="12">
    <location>
        <position position="454"/>
    </location>
</feature>
<feature type="modified residue" description="Phosphoserine; by GSK3-beta" evidence="12">
    <location>
        <position position="458"/>
    </location>
</feature>
<feature type="modified residue" description="Phosphoserine; by GSK3-beta" evidence="12">
    <location>
        <position position="462"/>
    </location>
</feature>
<feature type="modified residue" description="Phosphoserine; by GSK3-beta" evidence="12">
    <location>
        <position position="466"/>
    </location>
</feature>
<feature type="modified residue" description="Phosphoserine; by GSK3-beta" evidence="12">
    <location>
        <position position="624"/>
    </location>
</feature>
<feature type="modified residue" description="Phosphoserine; by GSK3-beta" evidence="12">
    <location>
        <position position="628"/>
    </location>
</feature>
<feature type="modified residue" description="Phosphoserine; by GSK3-beta" evidence="12">
    <location>
        <position position="632"/>
    </location>
</feature>
<feature type="modified residue" description="Phosphoserine; by GSK3-beta" evidence="12">
    <location>
        <position position="636"/>
    </location>
</feature>
<feature type="modified residue" description="Phosphoserine; by MAPK1 and MAPK3" evidence="15">
    <location>
        <position position="812"/>
    </location>
</feature>
<feature type="modified residue" description="Phosphoserine; by MAPK1 and MAPK3" evidence="15">
    <location>
        <position position="859"/>
    </location>
</feature>
<feature type="modified residue" description="Phosphoserine; by MAPK1 and MAPK3" evidence="15">
    <location>
        <position position="866"/>
    </location>
</feature>
<feature type="modified residue" description="Phosphothreonine; by MAPK1 and MAPK3" evidence="15">
    <location>
        <position position="893"/>
    </location>
</feature>
<feature type="splice variant" id="VSP_007662" description="In isoform 2." evidence="20">
    <location>
        <begin position="1"/>
        <end position="128"/>
    </location>
</feature>
<feature type="splice variant" id="VSP_041684" description="In isoform 4 and isoform 5." evidence="21">
    <location>
        <begin position="1"/>
        <end position="79"/>
    </location>
</feature>
<feature type="splice variant" id="VSP_007663" description="In isoform 2, isoform 3 and isoform 4." evidence="19 20">
    <original>Q</original>
    <variation>QNSGAHEGHSSSFSSPASSLHQPFSGTQADSSHSAGLNPCPKSPSIHPK</variation>
    <location>
        <position position="683"/>
    </location>
</feature>
<feature type="mutagenesis site" description="Activation of ANF promoter abolished, no effect on SM22 promoter." evidence="6">
    <original>ELR</original>
    <variation>PSF</variation>
    <location>
        <begin position="387"/>
        <end position="389"/>
    </location>
</feature>
<feature type="mutagenesis site" description="Activation of ANF promoter abolished, no effect on SM22 promoter." evidence="6">
    <original>DRL</original>
    <variation>PGH</variation>
    <location>
        <begin position="408"/>
        <end position="410"/>
    </location>
</feature>
<feature type="mutagenesis site" description="No effect on SRF activation. No effect on SRF activation, on interaction with EP300 and on SM-promoter activation; when associated with A-859; A-866 and A-893." evidence="15">
    <original>S</original>
    <variation>A</variation>
    <location>
        <position position="812"/>
    </location>
</feature>
<feature type="mutagenesis site" description="No effect on SRF activation. Impairs SRF activation, reduces interaction with EP300 and SM-promoter activation; when associated with D-859; D-866 and D-893." evidence="15">
    <original>S</original>
    <variation>D</variation>
    <location>
        <position position="812"/>
    </location>
</feature>
<feature type="mutagenesis site" description="No effect on SRF activation; No effect on SRF activation. No effect on SRF activation, on interaction with EP300 and on SM-promoter activation; when associated with A-812, A-866 and A-893." evidence="15">
    <original>S</original>
    <variation>A</variation>
    <location>
        <position position="859"/>
    </location>
</feature>
<feature type="mutagenesis site" description="No effect on SRF activation. Impairs SRF activation, reduces interaction with EP300 and SM-promoter activation; when associated with D-812; D-866 and D-893." evidence="15">
    <original>S</original>
    <variation>D</variation>
    <location>
        <position position="859"/>
    </location>
</feature>
<feature type="mutagenesis site" description="No effect on SRF activation; No effect on SRF activation, on interaction with EP300 and on SM-promoter activation; when associated with A-812; A-859 and A-893." evidence="15">
    <original>S</original>
    <variation>A</variation>
    <location>
        <position position="866"/>
    </location>
</feature>
<feature type="mutagenesis site" description="No effect on SRF activation. Impairs SRF activation, reduces interaction with EP300 and SM-promoter activation; when associated with D-812; D-859 and D-893." evidence="15">
    <original>S</original>
    <variation>D</variation>
    <location>
        <position position="866"/>
    </location>
</feature>
<feature type="mutagenesis site" description="No effect on SRF activation; No effect on SRF activation, on interaction with EP300 and on SM-specific genes transcription; when associated with A-812; A-859 and A-866." evidence="15">
    <original>T</original>
    <variation>A</variation>
    <location>
        <position position="893"/>
    </location>
</feature>
<feature type="mutagenesis site" description="No effect on SRF activation. Impairs SRF activation, reduces interaction with EP300 and SM-promoter activation; when associated with D-812; D-859 and D-866." evidence="15">
    <original>T</original>
    <variation>D</variation>
    <location>
        <position position="893"/>
    </location>
</feature>
<feature type="sequence conflict" description="In Ref. 1; AAK71683." evidence="21" ref="1">
    <original>P</original>
    <variation>Q</variation>
    <location>
        <position position="116"/>
    </location>
</feature>
<feature type="sequence conflict" description="In Ref. 1; AAK71683." evidence="21" ref="1">
    <original>D</original>
    <variation>G</variation>
    <location>
        <position position="794"/>
    </location>
</feature>
<sequence>MTLLGSEHSLLIRRKFRSVLQLRLQQRRTQEQLANQGLIPPLKGPTEFHDPRKQLDSAKTEDSLRRKGRNRSDRASLVTMHILQASTAERSIPTAQMKLKRARLADDLNEKIALRPGPLELVEKNILPMDSSVKEAIKGTEVSLSKAADAFAFEDDSSRDGLSPDQARSEDPQGSTGSTPDIKSTEAPLDTIQDLTPGSESDKNDAASQPGNQSDPGKQVLGPLSTPIPVHTAVKSKSLGDSKNRHKKPKDPKPKVKKLKYHQYIPPDQKAEKSPPPMDSAYARLLQQQQLFLQLQILSQQQQQQQQQQQQQQQQQQQQQRFSYPGMHQTHLKEPNEQMARNPNPSSTPLSNTPLSPVKNSISGQTGVSSLKPGPLPPNLDDLKVSELRQQLRIRGLPVSGTKTALVDRLRPFQDCAGNPVPNFGDITTVTFPVTPNTLPSYQSSPTGFYHFGSTSSSPPISPASSDLSAAGSLPDTFTDASPGFGLHASPVPACTDESLLSSLNGGSGPSEPDGLDSEKDKMLVEKQKVINQLTWKLRQEQRQVEELRMQLQKQKSSCSDQKPLPFLATTIKQEDVSSCPFAPQQASGKGQGHSSDSPPPACETAQLLPHCVESSGQTHVLSSTFLSPQCSPQHSPLGGLKSPQHISLPPSPNNHYFLASSSGAQRENHGVSSPSSSQGCAQMTGLQSSDKVGPTFSIPSPTFSKSSSAVSDITQPPSYEDAVKQQMTRSQQMDELLDVLIESGEMPADAREDHSCLQKIPKIPGSSCSPTAIPPKPSASFEQASSGGQMAFDHYANDSDEHLEVLLNSHSPIGKVSDVTLLKIGSEEPPFDSIMDGFPGKAAEDLFSAHELLPGPLSPMHAQLSPPSVDSSGLQLSFTESPWETMEWLDLTPPSSTPGFSNLTSSGPSIFNIDFLDVTDLNLNSPMDLHLQQW</sequence>
<gene>
    <name type="primary">Myocd</name>
    <name type="synonym">Bsac2</name>
    <name type="synonym">Mycd</name>
    <name type="synonym">Srfcp</name>
</gene>
<accession>Q8VIM5</accession>
<accession>Q5SS65</accession>
<accession>Q6W8X1</accession>
<accession>Q8C3W6</accession>
<accession>Q8VIL4</accession>
<reference key="1">
    <citation type="journal article" date="2001" name="Cell">
        <title>Activation of cardiac gene expression by myocardin, a transcriptional cofactor for serum response factor.</title>
        <authorList>
            <person name="Wang D.-Z."/>
            <person name="Chang P.S."/>
            <person name="Wang Z."/>
            <person name="Sutherland L."/>
            <person name="Richardson J.A."/>
            <person name="Small E."/>
            <person name="Krieg P.A."/>
            <person name="Olson E.N."/>
        </authorList>
    </citation>
    <scope>NUCLEOTIDE SEQUENCE [MRNA] (ISOFORM 1)</scope>
    <scope>FUNCTION</scope>
    <scope>TISSUE SPECIFICITY</scope>
    <scope>DEVELOPMENTAL STAGE</scope>
    <scope>SUBCELLULAR LOCATION</scope>
    <scope>INTERACTION WITH SRF</scope>
    <scope>MUTAGENESIS OF 387-GLU--ARG-389 AND 408-ASP--LEU-410</scope>
    <source>
        <tissue>Heart</tissue>
    </source>
</reference>
<reference key="2">
    <citation type="journal article" date="2002" name="Proc. Natl. Acad. Sci. U.S.A.">
        <title>Potentiation of serum response factor activity by a family of myocardin-related transcription factors.</title>
        <authorList>
            <person name="Wang D.-Z."/>
            <person name="Li S."/>
            <person name="Hockemeyer D."/>
            <person name="Sutherland L."/>
            <person name="Wang Z."/>
            <person name="Schratt G."/>
            <person name="Richardson J.A."/>
            <person name="Nordheim A."/>
            <person name="Olson E.N."/>
        </authorList>
    </citation>
    <scope>NUCLEOTIDE SEQUENCE [MRNA] (ISOFORM 1)</scope>
    <scope>SEQUENCE REVISION TO 1-128</scope>
    <scope>DEVELOPMENTAL STAGE</scope>
</reference>
<reference key="3">
    <citation type="journal article" date="2003" name="Mol. Cell. Biol.">
        <title>Myocardin expression is regulated by Nkx2.5, and its function is required for cardiomyogenesis.</title>
        <authorList>
            <person name="Ueyama T."/>
            <person name="Kasahara H."/>
            <person name="Ishiwata T."/>
            <person name="Nie Q."/>
            <person name="Izumo S."/>
        </authorList>
    </citation>
    <scope>NUCLEOTIDE SEQUENCE [MRNA] (ISOFORM 3)</scope>
    <scope>TISSUE SPECIFICITY (ISOFORM 1)</scope>
    <scope>DEVELOPMENTAL STAGE (ISOFORM 1)</scope>
    <source>
        <strain>NIH Swiss</strain>
    </source>
</reference>
<reference key="4">
    <citation type="submission" date="2001-10" db="EMBL/GenBank/DDBJ databases">
        <title>An alternative splicing form of myocardin (BSAC2), myocardin A (BSAC2A).</title>
        <authorList>
            <person name="Sawada T."/>
            <person name="Okazaki T."/>
            <person name="Nakano H."/>
        </authorList>
    </citation>
    <scope>NUCLEOTIDE SEQUENCE [MRNA] (ISOFORM 2)</scope>
    <source>
        <strain>C57BL/6J</strain>
        <tissue>Heart</tissue>
    </source>
</reference>
<reference key="5">
    <citation type="journal article" date="2003" name="Mol. Cell. Biol.">
        <title>Myocardin is a critical serum response factor cofactor in the transcriptional program regulating smooth muscle cell differentiation.</title>
        <authorList>
            <person name="Du K.L."/>
            <person name="Ip H.S."/>
            <person name="Li J."/>
            <person name="Chen M."/>
            <person name="Dandre F."/>
            <person name="Yu W."/>
            <person name="Lu M.M."/>
            <person name="Owens G.K."/>
            <person name="Parmacek M.S."/>
        </authorList>
    </citation>
    <scope>NUCLEOTIDE SEQUENCE [MRNA] (ISOFORM 1)</scope>
    <scope>FUNCTION</scope>
    <scope>TISSUE SPECIFICITY</scope>
    <scope>DEVELOPMENTAL STAGE</scope>
</reference>
<reference key="6">
    <citation type="journal article" date="2005" name="Science">
        <title>The transcriptional landscape of the mammalian genome.</title>
        <authorList>
            <person name="Carninci P."/>
            <person name="Kasukawa T."/>
            <person name="Katayama S."/>
            <person name="Gough J."/>
            <person name="Frith M.C."/>
            <person name="Maeda N."/>
            <person name="Oyama R."/>
            <person name="Ravasi T."/>
            <person name="Lenhard B."/>
            <person name="Wells C."/>
            <person name="Kodzius R."/>
            <person name="Shimokawa K."/>
            <person name="Bajic V.B."/>
            <person name="Brenner S.E."/>
            <person name="Batalov S."/>
            <person name="Forrest A.R."/>
            <person name="Zavolan M."/>
            <person name="Davis M.J."/>
            <person name="Wilming L.G."/>
            <person name="Aidinis V."/>
            <person name="Allen J.E."/>
            <person name="Ambesi-Impiombato A."/>
            <person name="Apweiler R."/>
            <person name="Aturaliya R.N."/>
            <person name="Bailey T.L."/>
            <person name="Bansal M."/>
            <person name="Baxter L."/>
            <person name="Beisel K.W."/>
            <person name="Bersano T."/>
            <person name="Bono H."/>
            <person name="Chalk A.M."/>
            <person name="Chiu K.P."/>
            <person name="Choudhary V."/>
            <person name="Christoffels A."/>
            <person name="Clutterbuck D.R."/>
            <person name="Crowe M.L."/>
            <person name="Dalla E."/>
            <person name="Dalrymple B.P."/>
            <person name="de Bono B."/>
            <person name="Della Gatta G."/>
            <person name="di Bernardo D."/>
            <person name="Down T."/>
            <person name="Engstrom P."/>
            <person name="Fagiolini M."/>
            <person name="Faulkner G."/>
            <person name="Fletcher C.F."/>
            <person name="Fukushima T."/>
            <person name="Furuno M."/>
            <person name="Futaki S."/>
            <person name="Gariboldi M."/>
            <person name="Georgii-Hemming P."/>
            <person name="Gingeras T.R."/>
            <person name="Gojobori T."/>
            <person name="Green R.E."/>
            <person name="Gustincich S."/>
            <person name="Harbers M."/>
            <person name="Hayashi Y."/>
            <person name="Hensch T.K."/>
            <person name="Hirokawa N."/>
            <person name="Hill D."/>
            <person name="Huminiecki L."/>
            <person name="Iacono M."/>
            <person name="Ikeo K."/>
            <person name="Iwama A."/>
            <person name="Ishikawa T."/>
            <person name="Jakt M."/>
            <person name="Kanapin A."/>
            <person name="Katoh M."/>
            <person name="Kawasawa Y."/>
            <person name="Kelso J."/>
            <person name="Kitamura H."/>
            <person name="Kitano H."/>
            <person name="Kollias G."/>
            <person name="Krishnan S.P."/>
            <person name="Kruger A."/>
            <person name="Kummerfeld S.K."/>
            <person name="Kurochkin I.V."/>
            <person name="Lareau L.F."/>
            <person name="Lazarevic D."/>
            <person name="Lipovich L."/>
            <person name="Liu J."/>
            <person name="Liuni S."/>
            <person name="McWilliam S."/>
            <person name="Madan Babu M."/>
            <person name="Madera M."/>
            <person name="Marchionni L."/>
            <person name="Matsuda H."/>
            <person name="Matsuzawa S."/>
            <person name="Miki H."/>
            <person name="Mignone F."/>
            <person name="Miyake S."/>
            <person name="Morris K."/>
            <person name="Mottagui-Tabar S."/>
            <person name="Mulder N."/>
            <person name="Nakano N."/>
            <person name="Nakauchi H."/>
            <person name="Ng P."/>
            <person name="Nilsson R."/>
            <person name="Nishiguchi S."/>
            <person name="Nishikawa S."/>
            <person name="Nori F."/>
            <person name="Ohara O."/>
            <person name="Okazaki Y."/>
            <person name="Orlando V."/>
            <person name="Pang K.C."/>
            <person name="Pavan W.J."/>
            <person name="Pavesi G."/>
            <person name="Pesole G."/>
            <person name="Petrovsky N."/>
            <person name="Piazza S."/>
            <person name="Reed J."/>
            <person name="Reid J.F."/>
            <person name="Ring B.Z."/>
            <person name="Ringwald M."/>
            <person name="Rost B."/>
            <person name="Ruan Y."/>
            <person name="Salzberg S.L."/>
            <person name="Sandelin A."/>
            <person name="Schneider C."/>
            <person name="Schoenbach C."/>
            <person name="Sekiguchi K."/>
            <person name="Semple C.A."/>
            <person name="Seno S."/>
            <person name="Sessa L."/>
            <person name="Sheng Y."/>
            <person name="Shibata Y."/>
            <person name="Shimada H."/>
            <person name="Shimada K."/>
            <person name="Silva D."/>
            <person name="Sinclair B."/>
            <person name="Sperling S."/>
            <person name="Stupka E."/>
            <person name="Sugiura K."/>
            <person name="Sultana R."/>
            <person name="Takenaka Y."/>
            <person name="Taki K."/>
            <person name="Tammoja K."/>
            <person name="Tan S.L."/>
            <person name="Tang S."/>
            <person name="Taylor M.S."/>
            <person name="Tegner J."/>
            <person name="Teichmann S.A."/>
            <person name="Ueda H.R."/>
            <person name="van Nimwegen E."/>
            <person name="Verardo R."/>
            <person name="Wei C.L."/>
            <person name="Yagi K."/>
            <person name="Yamanishi H."/>
            <person name="Zabarovsky E."/>
            <person name="Zhu S."/>
            <person name="Zimmer A."/>
            <person name="Hide W."/>
            <person name="Bult C."/>
            <person name="Grimmond S.M."/>
            <person name="Teasdale R.D."/>
            <person name="Liu E.T."/>
            <person name="Brusic V."/>
            <person name="Quackenbush J."/>
            <person name="Wahlestedt C."/>
            <person name="Mattick J.S."/>
            <person name="Hume D.A."/>
            <person name="Kai C."/>
            <person name="Sasaki D."/>
            <person name="Tomaru Y."/>
            <person name="Fukuda S."/>
            <person name="Kanamori-Katayama M."/>
            <person name="Suzuki M."/>
            <person name="Aoki J."/>
            <person name="Arakawa T."/>
            <person name="Iida J."/>
            <person name="Imamura K."/>
            <person name="Itoh M."/>
            <person name="Kato T."/>
            <person name="Kawaji H."/>
            <person name="Kawagashira N."/>
            <person name="Kawashima T."/>
            <person name="Kojima M."/>
            <person name="Kondo S."/>
            <person name="Konno H."/>
            <person name="Nakano K."/>
            <person name="Ninomiya N."/>
            <person name="Nishio T."/>
            <person name="Okada M."/>
            <person name="Plessy C."/>
            <person name="Shibata K."/>
            <person name="Shiraki T."/>
            <person name="Suzuki S."/>
            <person name="Tagami M."/>
            <person name="Waki K."/>
            <person name="Watahiki A."/>
            <person name="Okamura-Oho Y."/>
            <person name="Suzuki H."/>
            <person name="Kawai J."/>
            <person name="Hayashizaki Y."/>
        </authorList>
    </citation>
    <scope>NUCLEOTIDE SEQUENCE [LARGE SCALE MRNA] (ISOFORM 1)</scope>
    <source>
        <strain>C57BL/6J</strain>
        <tissue>Embryonic heart</tissue>
    </source>
</reference>
<reference key="7">
    <citation type="journal article" date="2009" name="PLoS Biol.">
        <title>Lineage-specific biology revealed by a finished genome assembly of the mouse.</title>
        <authorList>
            <person name="Church D.M."/>
            <person name="Goodstadt L."/>
            <person name="Hillier L.W."/>
            <person name="Zody M.C."/>
            <person name="Goldstein S."/>
            <person name="She X."/>
            <person name="Bult C.J."/>
            <person name="Agarwala R."/>
            <person name="Cherry J.L."/>
            <person name="DiCuccio M."/>
            <person name="Hlavina W."/>
            <person name="Kapustin Y."/>
            <person name="Meric P."/>
            <person name="Maglott D."/>
            <person name="Birtle Z."/>
            <person name="Marques A.C."/>
            <person name="Graves T."/>
            <person name="Zhou S."/>
            <person name="Teague B."/>
            <person name="Potamousis K."/>
            <person name="Churas C."/>
            <person name="Place M."/>
            <person name="Herschleb J."/>
            <person name="Runnheim R."/>
            <person name="Forrest D."/>
            <person name="Amos-Landgraf J."/>
            <person name="Schwartz D.C."/>
            <person name="Cheng Z."/>
            <person name="Lindblad-Toh K."/>
            <person name="Eichler E.E."/>
            <person name="Ponting C.P."/>
        </authorList>
    </citation>
    <scope>NUCLEOTIDE SEQUENCE [LARGE SCALE GENOMIC DNA]</scope>
    <source>
        <strain>C57BL/6J</strain>
    </source>
</reference>
<reference key="8">
    <citation type="journal article" date="2003" name="Circ. Res.">
        <title>Myocardin is a key regulator of CArG-dependent transcription of multiple smooth muscle marker genes.</title>
        <authorList>
            <person name="Yoshida T."/>
            <person name="Sinha S."/>
            <person name="Dandre F."/>
            <person name="Wamhoff B.R."/>
            <person name="Hoofnagle M.H."/>
            <person name="Kremer B.E."/>
            <person name="Wang D.-Z."/>
            <person name="Olson E.N."/>
            <person name="Owens G.K."/>
        </authorList>
    </citation>
    <scope>FUNCTION</scope>
    <scope>TISSUE SPECIFICITY</scope>
    <scope>INTERACTION WITH SRF</scope>
</reference>
<reference key="9">
    <citation type="journal article" date="2005" name="Circ. Res.">
        <title>Glycogen synthase kinase 3beta inhibits myocardin-dependent transcription and hypertrophy induction through site-specific phosphorylation.</title>
        <authorList>
            <person name="Badorff C."/>
            <person name="Seeger F.H."/>
            <person name="Zeiher A.M."/>
            <person name="Dimmeler S."/>
        </authorList>
    </citation>
    <scope>PHOSPHORYLATION AT SER-454; SER-458; SER-462; SER-466; SER-624; SER-628; SER-632 AND SER-636</scope>
</reference>
<reference key="10">
    <citation type="journal article" date="2005" name="Mol. Cell. Biol.">
        <title>Modulation of smooth muscle gene expression by association of histone acetyltransferases and deacetylases with myocardin.</title>
        <authorList>
            <person name="Cao D."/>
            <person name="Wang Z."/>
            <person name="Zhang C.L."/>
            <person name="Oh J."/>
            <person name="Xing W."/>
            <person name="Li S."/>
            <person name="Richardson J.A."/>
            <person name="Wang D.Z."/>
            <person name="Olson E.N."/>
        </authorList>
    </citation>
    <scope>SUBCELLULAR LOCATION</scope>
    <scope>INTERACTION WITH EP300; HDAC4 AND HDAC5</scope>
</reference>
<reference key="11">
    <citation type="journal article" date="2006" name="Mol. Cell">
        <title>Coactivation of MEF2 by the SAP domain proteins myocardin and MASTR.</title>
        <authorList>
            <person name="Creemers E.E."/>
            <person name="Sutherland L.B."/>
            <person name="Oh J."/>
            <person name="Barbosa A.C."/>
            <person name="Olson E.N."/>
        </authorList>
    </citation>
    <scope>ALTERNATIVE SPLICING (ISOFORMS 2 AND 4)</scope>
    <scope>INTERACTION WITH MEF2C</scope>
    <scope>FUNCTION</scope>
</reference>
<reference key="12">
    <citation type="journal article" date="2009" name="J. Biol. Chem.">
        <title>Phosphorylation of myocardin by extracellular signal-regulated kinase.</title>
        <authorList>
            <person name="Taurin S."/>
            <person name="Sandbo N."/>
            <person name="Yau D.M."/>
            <person name="Sethakorn N."/>
            <person name="Kach J."/>
            <person name="Dulin N.O."/>
        </authorList>
    </citation>
    <scope>PHOSPHORYLATION AT SER-812; SER-859; SER-866 AND THR-893</scope>
    <scope>MUTAGENESIS OF SER-812; SER-859; SER-866 AND THR-893</scope>
</reference>
<reference key="13">
    <citation type="journal article" date="2009" name="Mol. Cell. Biol.">
        <title>CHIP represses myocardin-induced smooth muscle cell differentiation via ubiquitin-mediated proteasomal degradation.</title>
        <authorList>
            <person name="Xie P."/>
            <person name="Fan Y."/>
            <person name="Zhang H."/>
            <person name="Zhang Y."/>
            <person name="She M."/>
            <person name="Gu D."/>
            <person name="Patterson C."/>
            <person name="Li H."/>
        </authorList>
    </citation>
    <scope>INTERACTION WITH STUB1</scope>
    <scope>UBIQUITINATION</scope>
    <scope>PHOSPHORYLATION</scope>
</reference>
<reference key="14">
    <citation type="journal article" date="2010" name="Gene">
        <title>Expression and functional activity of four myocardin isoforms.</title>
        <authorList>
            <person name="Imamura M."/>
            <person name="Long X."/>
            <person name="Nanda V."/>
            <person name="Miano J.M."/>
        </authorList>
    </citation>
    <scope>ALTERNATIVE SPLICING (ISOFORMS 1; 2; 3; 4 AND 5)</scope>
    <scope>FUNCTION (ISOFORMS 1; 3; 4 AND 5)</scope>
    <scope>TISSUE SPECIFICITY (ISOFORMS 3; 4 AND 5)</scope>
</reference>
<reference key="15">
    <citation type="journal article" date="2019" name="J. Clin. Invest.">
        <title>Loss-of-function variants in myocardin cause congenital megabladder in humans and mice.</title>
        <authorList>
            <person name="Houweling A.C."/>
            <person name="Beaman G.M."/>
            <person name="Postma A.V."/>
            <person name="Gainous T.B."/>
            <person name="Lichtenbelt K.D."/>
            <person name="Brancati F."/>
            <person name="Lopes F.M."/>
            <person name="van der Made I."/>
            <person name="Polstra A.M."/>
            <person name="Robinson M.L."/>
            <person name="Wright K.D."/>
            <person name="Ellingford J.M."/>
            <person name="Jackson A.R."/>
            <person name="Overwater E."/>
            <person name="Genesio R."/>
            <person name="Romano S."/>
            <person name="Camerota L."/>
            <person name="D'Angelo E."/>
            <person name="Meijers-Heijboer E.J."/>
            <person name="Christoffels V.M."/>
            <person name="McHugh K.M."/>
            <person name="Black B.L."/>
            <person name="Newman W.G."/>
            <person name="Woolf A.S."/>
            <person name="Creemers E.E."/>
        </authorList>
    </citation>
    <scope>FUNCTION</scope>
</reference>
<reference key="16">
    <citation type="journal article" date="2021" name="Mol. Cell. Biochem.">
        <title>Purine-rich element binding protein B attenuates the coactivator function of myocardin by a novel molecular mechanism of smooth muscle gene repression.</title>
        <authorList>
            <person name="Ferris L.A."/>
            <person name="Foote A.T."/>
            <person name="Wang S.X."/>
            <person name="Kelm R.J. Jr."/>
        </authorList>
    </citation>
    <scope>INTERACTION WITH PURB</scope>
</reference>
<proteinExistence type="evidence at protein level"/>
<comment type="function">
    <text evidence="2 6 8 9 13 16 17">Smooth muscle cells (SM) and cardiac muscle cells-specific transcriptional factor which uses the canonical single or multiple CArG boxes DNA sequence. Acts as a cofactor of serum response factor (SRF) with the potential to modulate SRF-target genes. Plays a crucial role in cardiogenesis, urinary bladder development, and differentiation of the smooth muscle cell lineage (myogenesis). Positively regulates the transcription of genes involved in vascular smooth muscle contraction (By similarity).</text>
</comment>
<comment type="function">
    <molecule>Isoform 1</molecule>
    <text evidence="16">Positively regulates the activation of smooth muscle cell gene promoter regions.</text>
</comment>
<comment type="function">
    <molecule>Isoform 3</molecule>
    <text evidence="16">Positively regulates the activation of smooth muscle cell gene promoter regions (PubMed:20385216). Activation of the MYH6 promoter is enhanced in the presence of MEF2C (PubMed:20385216).</text>
</comment>
<comment type="function">
    <molecule>Isoform 4</molecule>
    <text evidence="16">Positively regulates the activation of smooth muscle cell gene promoter regions.</text>
</comment>
<comment type="function">
    <molecule>Isoform 5</molecule>
    <text evidence="16">Positively regulates the activation of smooth muscle cell gene promoter regions.</text>
</comment>
<comment type="subunit">
    <text evidence="1 2 6 9 11 13 14 18">Homodimer. Interacts with MLLT7/FOXO4 (By similarity). Interacts with SRF, its association does not depend on specific DNA sequences for ternary complex formation. Interacts (via C-terminal) with EP300 (via CREB-binding domain). Interacts with HDAC4 and HDAC5. Interacts with MEF2C. Interacts (via C-terminus) with STUB1/CHIP (PubMed:19237536). Interacts with PURB (PubMed:33743134).</text>
</comment>
<comment type="interaction">
    <interactant intactId="EBI-15626132">
        <id>Q8VIM5-1</id>
    </interactant>
    <interactant intactId="EBI-4405734">
        <id>P10085</id>
        <label>Myod1</label>
    </interactant>
    <organismsDiffer>false</organismsDiffer>
    <experiments>2</experiments>
</comment>
<comment type="interaction">
    <interactant intactId="EBI-15626132">
        <id>Q8VIM5-1</id>
    </interactant>
    <interactant intactId="EBI-81196">
        <id>Q9Y6Q9</id>
        <label>NCOA3</label>
    </interactant>
    <organismsDiffer>true</organismsDiffer>
    <experiments>5</experiments>
</comment>
<comment type="interaction">
    <interactant intactId="EBI-15626132">
        <id>Q8VIM5-1</id>
    </interactant>
    <interactant intactId="EBI-73886">
        <id>Q04206</id>
        <label>RELA</label>
    </interactant>
    <organismsDiffer>true</organismsDiffer>
    <experiments>2</experiments>
</comment>
<comment type="interaction">
    <interactant intactId="EBI-15626132">
        <id>Q8VIM5-1</id>
    </interactant>
    <interactant intactId="EBI-10826776">
        <id>Q04206-1</id>
        <label>RELA</label>
    </interactant>
    <organismsDiffer>true</organismsDiffer>
    <experiments>2</experiments>
</comment>
<comment type="subcellular location">
    <subcellularLocation>
        <location evidence="6 11">Nucleus speckle</location>
    </subcellularLocation>
    <text>Nuclear, with a punctate intranuclear pattern with exclusion from nuclei.</text>
</comment>
<comment type="alternative products">
    <event type="alternative splicing"/>
    <isoform>
        <id>Q8VIM5-1</id>
        <name>1</name>
        <name>MYOCD-v2</name>
        <sequence type="displayed"/>
    </isoform>
    <isoform>
        <id>Q8VIM5-2</id>
        <name>2</name>
        <name>BSAC2A</name>
        <name>Myocardin A</name>
        <name>MYOCD-v5</name>
        <sequence type="described" ref="VSP_007662 VSP_007663"/>
    </isoform>
    <isoform>
        <id>Q8VIM5-3</id>
        <name>3</name>
        <name>=Myocardin A</name>
        <name>MYOCD-v1</name>
        <sequence type="described" ref="VSP_007663"/>
    </isoform>
    <isoform>
        <id>Q8VIM5-4</id>
        <name>4</name>
        <name>MYOCD-v3</name>
        <sequence type="described" ref="VSP_041684 VSP_007663"/>
    </isoform>
    <isoform>
        <id>Q8VIM5-5</id>
        <name>5</name>
        <name>MYOCD-v4</name>
        <sequence type="described" ref="VSP_041684"/>
    </isoform>
</comment>
<comment type="tissue specificity">
    <text evidence="6 8 9 10 16">Expressed in smooth muscle cell-containing tissues (PubMed:12663482). Expressed in the heart (PubMed:11439182, PubMed:12640126, PubMed:12663482, PubMed:14645532, PubMed:20385216). Expressed in the aorta and bladder (PubMed:12640126, PubMed:12663482, PubMed:20385216). Weakly expression in the lung, testis and kidney (PubMed:14645532). Weakly expressed in the stomach (PubMed:12640126, PubMed:12663482). Weakly expressed in the intestine and colon (PubMed:12663482).</text>
</comment>
<comment type="tissue specificity">
    <molecule>Isoform 1</molecule>
    <text evidence="10">Expressed in the heart.</text>
</comment>
<comment type="tissue specificity">
    <molecule>Isoform 3</molecule>
    <text evidence="16">Predominantly expressed in cardiac muscle.</text>
</comment>
<comment type="tissue specificity">
    <molecule>Isoform 4</molecule>
    <text evidence="16">Predominantly expressed in smooth muscle cell-rich tissues.</text>
</comment>
<comment type="tissue specificity">
    <molecule>Isoform 5</molecule>
    <text evidence="16">Predominantly expressed in smooth muscle cell-rich tissues.</text>
</comment>
<comment type="developmental stage">
    <text evidence="6 7 8 10">Detected in the cardiac crescent at 7.75 dpc and in the linear heart tube at 8.0 dpc and the developing atrial and aortic ventricular chambers until birth (PubMed:11439182). Also detected in a subset of vascular and visceral smooth muscle cells: aortic arch arteries at 9.5 dpc (PubMed:12397177, PubMed:12640126). Expressed in the heart at 10 dpc (PubMed:14645532). Expressed in the walls of the esophagus, dorsal aorta, pulmonary outflow tract, lung, gut, stomach, small intestine, bladder, and the head mesenchyme at 13.5 dpc until birth (PubMed:12397177, PubMed:12640126). Not detected in skeletal muscle cells (PubMed:12397177, PubMed:12640126).</text>
</comment>
<comment type="developmental stage">
    <molecule>Isoform 1</molecule>
    <text evidence="10">Expressed in the heart at 10 dpc.</text>
</comment>
<comment type="domain">
    <text>The C-terminal region contains a general transcription activation domain. The N-terminal region, comprising a basic and a Gln-rich domain, confers transcriptional potency and specificity by mediating association with the MADS box of SRF. The basic domain may be required for nuclear localization. The SAP domain is important for transactivation and ternary complex formation.</text>
</comment>
<comment type="PTM">
    <text evidence="2 14">Ubiquitinated; by STUB1/CHIP at the C-terminus, leading to its degradation by the proteasome (PubMed:19237536). Phosphorylation by GSK3B is required for STUB1/CHIP-mediated ubiquitination (By similarity).</text>
</comment>
<comment type="PTM">
    <text evidence="12 14 15">Phosphorylation negatively regulates transcriptional activity (PubMed:16141410, PubMed:19776005). Phosphorylated; by GSK3B (PubMed:19237536).</text>
</comment>